<proteinExistence type="inferred from homology"/>
<sequence>MAREFSLAKTRNIGIMAHVDAGKTTTTERILYYTGKIHKIGETHEGASQMDWMAQEQERGITITSAATTAQWDGHRVNIIDTPGHVDFTIEVQRSLRVLDGAVTVLDAQSGVEPQTETVWRQATEYRVPRIVFANKMDKIGADFLYSVSTLHDRLQANAHPIQLPIGSEDDFTGIIDLIKMKAEIYTNDLGTDIREEDIPAEYVDQANEYREKLVEAVAETDEELMMKYLEGEEITNEELMAGIRKATINVEFFPVLCGSAFKNKGVQLMLDAVIDYLPSPLDIPAIKGVNPDTDAEETRPASDEEPFAALAFKIMTDPFVGRLTFFRVYSGVLQSGSYVMNTSKGKRERIGRILQMHANTRQEIETVYSGDIAAAVGLKNTTTGDSLTDEKAQVILESIEVPEPVIQLMVEPKSKADQDKMGVALQKLAEEDPTFRVETNVETGETVIAGMGELHLDVLVDRMKREFKVEANVGAPQVSYRETFRASTQARGFFKRQSGGKGQFGDVWIEFTPNEEGKGFEFENAIVGGVVPREFIPAVEKGLIESMANGVLAGYPLVDVKAKLYDGSYHDVDSSETAFKIAASLALKEAAKSAQPSILEPMMLVTITAPEDNLGDVMGHVTARRGRVDGMEARGNIQVVRAYVPLAEMFGYATILRSATQGRGTFMMVFDHYEDVPKSVQEEIIKKNHGE</sequence>
<keyword id="KW-0963">Cytoplasm</keyword>
<keyword id="KW-0251">Elongation factor</keyword>
<keyword id="KW-0342">GTP-binding</keyword>
<keyword id="KW-0547">Nucleotide-binding</keyword>
<keyword id="KW-0648">Protein biosynthesis</keyword>
<keyword id="KW-1185">Reference proteome</keyword>
<protein>
    <recommendedName>
        <fullName evidence="1">Elongation factor G</fullName>
        <shortName evidence="1">EF-G</shortName>
    </recommendedName>
</protein>
<comment type="function">
    <text evidence="1">Catalyzes the GTP-dependent ribosomal translocation step during translation elongation. During this step, the ribosome changes from the pre-translocational (PRE) to the post-translocational (POST) state as the newly formed A-site-bound peptidyl-tRNA and P-site-bound deacylated tRNA move to the P and E sites, respectively. Catalyzes the coordinated movement of the two tRNA molecules, the mRNA and conformational changes in the ribosome.</text>
</comment>
<comment type="subcellular location">
    <subcellularLocation>
        <location evidence="1">Cytoplasm</location>
    </subcellularLocation>
</comment>
<comment type="similarity">
    <text evidence="1">Belongs to the TRAFAC class translation factor GTPase superfamily. Classic translation factor GTPase family. EF-G/EF-2 subfamily.</text>
</comment>
<organism>
    <name type="scientific">Streptococcus uberis (strain ATCC BAA-854 / 0140J)</name>
    <dbReference type="NCBI Taxonomy" id="218495"/>
    <lineage>
        <taxon>Bacteria</taxon>
        <taxon>Bacillati</taxon>
        <taxon>Bacillota</taxon>
        <taxon>Bacilli</taxon>
        <taxon>Lactobacillales</taxon>
        <taxon>Streptococcaceae</taxon>
        <taxon>Streptococcus</taxon>
    </lineage>
</organism>
<name>EFG_STRU0</name>
<reference key="1">
    <citation type="journal article" date="2009" name="BMC Genomics">
        <title>Evidence for niche adaptation in the genome of the bovine pathogen Streptococcus uberis.</title>
        <authorList>
            <person name="Ward P.N."/>
            <person name="Holden M.T.G."/>
            <person name="Leigh J.A."/>
            <person name="Lennard N."/>
            <person name="Bignell A."/>
            <person name="Barron A."/>
            <person name="Clark L."/>
            <person name="Quail M.A."/>
            <person name="Woodward J."/>
            <person name="Barrell B.G."/>
            <person name="Egan S.A."/>
            <person name="Field T.R."/>
            <person name="Maskell D."/>
            <person name="Kehoe M."/>
            <person name="Dowson C.G."/>
            <person name="Chanter N."/>
            <person name="Whatmore A.M."/>
            <person name="Bentley S.D."/>
            <person name="Parkhill J."/>
        </authorList>
    </citation>
    <scope>NUCLEOTIDE SEQUENCE [LARGE SCALE GENOMIC DNA]</scope>
    <source>
        <strain>ATCC BAA-854 / 0140J</strain>
    </source>
</reference>
<gene>
    <name evidence="1" type="primary">fusA</name>
    <name type="ordered locus">SUB1631</name>
</gene>
<accession>B9DVS2</accession>
<dbReference type="EMBL" id="AM946015">
    <property type="protein sequence ID" value="CAR43484.1"/>
    <property type="molecule type" value="Genomic_DNA"/>
</dbReference>
<dbReference type="RefSeq" id="WP_015911930.1">
    <property type="nucleotide sequence ID" value="NC_012004.1"/>
</dbReference>
<dbReference type="SMR" id="B9DVS2"/>
<dbReference type="STRING" id="218495.SUB1631"/>
<dbReference type="KEGG" id="sub:SUB1631"/>
<dbReference type="eggNOG" id="COG0480">
    <property type="taxonomic scope" value="Bacteria"/>
</dbReference>
<dbReference type="HOGENOM" id="CLU_002794_4_1_9"/>
<dbReference type="OrthoDB" id="9804431at2"/>
<dbReference type="Proteomes" id="UP000000449">
    <property type="component" value="Chromosome"/>
</dbReference>
<dbReference type="GO" id="GO:0005737">
    <property type="term" value="C:cytoplasm"/>
    <property type="evidence" value="ECO:0007669"/>
    <property type="project" value="UniProtKB-SubCell"/>
</dbReference>
<dbReference type="GO" id="GO:0005525">
    <property type="term" value="F:GTP binding"/>
    <property type="evidence" value="ECO:0007669"/>
    <property type="project" value="UniProtKB-UniRule"/>
</dbReference>
<dbReference type="GO" id="GO:0003924">
    <property type="term" value="F:GTPase activity"/>
    <property type="evidence" value="ECO:0007669"/>
    <property type="project" value="InterPro"/>
</dbReference>
<dbReference type="GO" id="GO:0003746">
    <property type="term" value="F:translation elongation factor activity"/>
    <property type="evidence" value="ECO:0007669"/>
    <property type="project" value="UniProtKB-UniRule"/>
</dbReference>
<dbReference type="GO" id="GO:0032790">
    <property type="term" value="P:ribosome disassembly"/>
    <property type="evidence" value="ECO:0007669"/>
    <property type="project" value="TreeGrafter"/>
</dbReference>
<dbReference type="CDD" id="cd01886">
    <property type="entry name" value="EF-G"/>
    <property type="match status" value="1"/>
</dbReference>
<dbReference type="CDD" id="cd16262">
    <property type="entry name" value="EFG_III"/>
    <property type="match status" value="1"/>
</dbReference>
<dbReference type="CDD" id="cd01434">
    <property type="entry name" value="EFG_mtEFG1_IV"/>
    <property type="match status" value="1"/>
</dbReference>
<dbReference type="CDD" id="cd03713">
    <property type="entry name" value="EFG_mtEFG_C"/>
    <property type="match status" value="1"/>
</dbReference>
<dbReference type="CDD" id="cd04088">
    <property type="entry name" value="EFG_mtEFG_II"/>
    <property type="match status" value="1"/>
</dbReference>
<dbReference type="FunFam" id="2.40.30.10:FF:000006">
    <property type="entry name" value="Elongation factor G"/>
    <property type="match status" value="1"/>
</dbReference>
<dbReference type="FunFam" id="3.30.230.10:FF:000003">
    <property type="entry name" value="Elongation factor G"/>
    <property type="match status" value="1"/>
</dbReference>
<dbReference type="FunFam" id="3.30.70.240:FF:000001">
    <property type="entry name" value="Elongation factor G"/>
    <property type="match status" value="1"/>
</dbReference>
<dbReference type="FunFam" id="3.30.70.870:FF:000001">
    <property type="entry name" value="Elongation factor G"/>
    <property type="match status" value="1"/>
</dbReference>
<dbReference type="FunFam" id="3.40.50.300:FF:000029">
    <property type="entry name" value="Elongation factor G"/>
    <property type="match status" value="1"/>
</dbReference>
<dbReference type="Gene3D" id="3.30.230.10">
    <property type="match status" value="1"/>
</dbReference>
<dbReference type="Gene3D" id="3.30.70.240">
    <property type="match status" value="1"/>
</dbReference>
<dbReference type="Gene3D" id="3.30.70.870">
    <property type="entry name" value="Elongation Factor G (Translational Gtpase), domain 3"/>
    <property type="match status" value="1"/>
</dbReference>
<dbReference type="Gene3D" id="3.40.50.300">
    <property type="entry name" value="P-loop containing nucleotide triphosphate hydrolases"/>
    <property type="match status" value="1"/>
</dbReference>
<dbReference type="Gene3D" id="2.40.30.10">
    <property type="entry name" value="Translation factors"/>
    <property type="match status" value="1"/>
</dbReference>
<dbReference type="HAMAP" id="MF_00054_B">
    <property type="entry name" value="EF_G_EF_2_B"/>
    <property type="match status" value="1"/>
</dbReference>
<dbReference type="InterPro" id="IPR053905">
    <property type="entry name" value="EF-G-like_DII"/>
</dbReference>
<dbReference type="InterPro" id="IPR041095">
    <property type="entry name" value="EFG_II"/>
</dbReference>
<dbReference type="InterPro" id="IPR009022">
    <property type="entry name" value="EFG_III"/>
</dbReference>
<dbReference type="InterPro" id="IPR035647">
    <property type="entry name" value="EFG_III/V"/>
</dbReference>
<dbReference type="InterPro" id="IPR047872">
    <property type="entry name" value="EFG_IV"/>
</dbReference>
<dbReference type="InterPro" id="IPR035649">
    <property type="entry name" value="EFG_V"/>
</dbReference>
<dbReference type="InterPro" id="IPR000640">
    <property type="entry name" value="EFG_V-like"/>
</dbReference>
<dbReference type="InterPro" id="IPR031157">
    <property type="entry name" value="G_TR_CS"/>
</dbReference>
<dbReference type="InterPro" id="IPR027417">
    <property type="entry name" value="P-loop_NTPase"/>
</dbReference>
<dbReference type="InterPro" id="IPR020568">
    <property type="entry name" value="Ribosomal_Su5_D2-typ_SF"/>
</dbReference>
<dbReference type="InterPro" id="IPR014721">
    <property type="entry name" value="Ribsml_uS5_D2-typ_fold_subgr"/>
</dbReference>
<dbReference type="InterPro" id="IPR005225">
    <property type="entry name" value="Small_GTP-bd"/>
</dbReference>
<dbReference type="InterPro" id="IPR000795">
    <property type="entry name" value="T_Tr_GTP-bd_dom"/>
</dbReference>
<dbReference type="InterPro" id="IPR009000">
    <property type="entry name" value="Transl_B-barrel_sf"/>
</dbReference>
<dbReference type="InterPro" id="IPR004540">
    <property type="entry name" value="Transl_elong_EFG/EF2"/>
</dbReference>
<dbReference type="InterPro" id="IPR005517">
    <property type="entry name" value="Transl_elong_EFG/EF2_IV"/>
</dbReference>
<dbReference type="NCBIfam" id="TIGR00484">
    <property type="entry name" value="EF-G"/>
    <property type="match status" value="1"/>
</dbReference>
<dbReference type="NCBIfam" id="NF009379">
    <property type="entry name" value="PRK12740.1-3"/>
    <property type="match status" value="1"/>
</dbReference>
<dbReference type="NCBIfam" id="NF009381">
    <property type="entry name" value="PRK12740.1-5"/>
    <property type="match status" value="1"/>
</dbReference>
<dbReference type="NCBIfam" id="TIGR00231">
    <property type="entry name" value="small_GTP"/>
    <property type="match status" value="1"/>
</dbReference>
<dbReference type="PANTHER" id="PTHR43261:SF1">
    <property type="entry name" value="RIBOSOME-RELEASING FACTOR 2, MITOCHONDRIAL"/>
    <property type="match status" value="1"/>
</dbReference>
<dbReference type="PANTHER" id="PTHR43261">
    <property type="entry name" value="TRANSLATION ELONGATION FACTOR G-RELATED"/>
    <property type="match status" value="1"/>
</dbReference>
<dbReference type="Pfam" id="PF22042">
    <property type="entry name" value="EF-G_D2"/>
    <property type="match status" value="1"/>
</dbReference>
<dbReference type="Pfam" id="PF00679">
    <property type="entry name" value="EFG_C"/>
    <property type="match status" value="1"/>
</dbReference>
<dbReference type="Pfam" id="PF14492">
    <property type="entry name" value="EFG_III"/>
    <property type="match status" value="1"/>
</dbReference>
<dbReference type="Pfam" id="PF03764">
    <property type="entry name" value="EFG_IV"/>
    <property type="match status" value="1"/>
</dbReference>
<dbReference type="Pfam" id="PF00009">
    <property type="entry name" value="GTP_EFTU"/>
    <property type="match status" value="1"/>
</dbReference>
<dbReference type="PRINTS" id="PR00315">
    <property type="entry name" value="ELONGATNFCT"/>
</dbReference>
<dbReference type="SMART" id="SM00838">
    <property type="entry name" value="EFG_C"/>
    <property type="match status" value="1"/>
</dbReference>
<dbReference type="SMART" id="SM00889">
    <property type="entry name" value="EFG_IV"/>
    <property type="match status" value="1"/>
</dbReference>
<dbReference type="SUPFAM" id="SSF54980">
    <property type="entry name" value="EF-G C-terminal domain-like"/>
    <property type="match status" value="2"/>
</dbReference>
<dbReference type="SUPFAM" id="SSF52540">
    <property type="entry name" value="P-loop containing nucleoside triphosphate hydrolases"/>
    <property type="match status" value="1"/>
</dbReference>
<dbReference type="SUPFAM" id="SSF54211">
    <property type="entry name" value="Ribosomal protein S5 domain 2-like"/>
    <property type="match status" value="1"/>
</dbReference>
<dbReference type="SUPFAM" id="SSF50447">
    <property type="entry name" value="Translation proteins"/>
    <property type="match status" value="1"/>
</dbReference>
<dbReference type="PROSITE" id="PS00301">
    <property type="entry name" value="G_TR_1"/>
    <property type="match status" value="1"/>
</dbReference>
<dbReference type="PROSITE" id="PS51722">
    <property type="entry name" value="G_TR_2"/>
    <property type="match status" value="1"/>
</dbReference>
<evidence type="ECO:0000255" key="1">
    <source>
        <dbReference type="HAMAP-Rule" id="MF_00054"/>
    </source>
</evidence>
<feature type="chain" id="PRO_1000201493" description="Elongation factor G">
    <location>
        <begin position="1"/>
        <end position="692"/>
    </location>
</feature>
<feature type="domain" description="tr-type G">
    <location>
        <begin position="8"/>
        <end position="282"/>
    </location>
</feature>
<feature type="binding site" evidence="1">
    <location>
        <begin position="17"/>
        <end position="24"/>
    </location>
    <ligand>
        <name>GTP</name>
        <dbReference type="ChEBI" id="CHEBI:37565"/>
    </ligand>
</feature>
<feature type="binding site" evidence="1">
    <location>
        <begin position="81"/>
        <end position="85"/>
    </location>
    <ligand>
        <name>GTP</name>
        <dbReference type="ChEBI" id="CHEBI:37565"/>
    </ligand>
</feature>
<feature type="binding site" evidence="1">
    <location>
        <begin position="135"/>
        <end position="138"/>
    </location>
    <ligand>
        <name>GTP</name>
        <dbReference type="ChEBI" id="CHEBI:37565"/>
    </ligand>
</feature>